<feature type="chain" id="PRO_0000150239" description="Alanine--glyoxylate aminotransferase 1">
    <location>
        <begin position="1"/>
        <end position="385"/>
    </location>
</feature>
<feature type="binding site">
    <location>
        <position position="354"/>
    </location>
    <ligand>
        <name>substrate</name>
    </ligand>
</feature>
<feature type="modified residue" description="N6-(pyridoxal phosphate)lysine">
    <location>
        <position position="201"/>
    </location>
</feature>
<feature type="strand" evidence="6">
    <location>
        <begin position="10"/>
        <end position="13"/>
    </location>
</feature>
<feature type="helix" evidence="6">
    <location>
        <begin position="18"/>
        <end position="22"/>
    </location>
</feature>
<feature type="helix" evidence="6">
    <location>
        <begin position="34"/>
        <end position="50"/>
    </location>
</feature>
<feature type="helix" evidence="6">
    <location>
        <begin position="55"/>
        <end position="57"/>
    </location>
</feature>
<feature type="strand" evidence="6">
    <location>
        <begin position="60"/>
        <end position="66"/>
    </location>
</feature>
<feature type="helix" evidence="6">
    <location>
        <begin position="70"/>
        <end position="79"/>
    </location>
</feature>
<feature type="strand" evidence="6">
    <location>
        <begin position="88"/>
        <end position="92"/>
    </location>
</feature>
<feature type="helix" evidence="6">
    <location>
        <begin position="96"/>
        <end position="107"/>
    </location>
</feature>
<feature type="strand" evidence="6">
    <location>
        <begin position="111"/>
        <end position="115"/>
    </location>
</feature>
<feature type="helix" evidence="6">
    <location>
        <begin position="126"/>
        <end position="135"/>
    </location>
</feature>
<feature type="strand" evidence="6">
    <location>
        <begin position="139"/>
        <end position="147"/>
    </location>
</feature>
<feature type="turn" evidence="6">
    <location>
        <begin position="148"/>
        <end position="151"/>
    </location>
</feature>
<feature type="helix" evidence="6">
    <location>
        <begin position="156"/>
        <end position="166"/>
    </location>
</feature>
<feature type="strand" evidence="6">
    <location>
        <begin position="170"/>
        <end position="175"/>
    </location>
</feature>
<feature type="turn" evidence="6">
    <location>
        <begin position="177"/>
        <end position="182"/>
    </location>
</feature>
<feature type="turn" evidence="6">
    <location>
        <begin position="187"/>
        <end position="191"/>
    </location>
</feature>
<feature type="strand" evidence="6">
    <location>
        <begin position="193"/>
        <end position="201"/>
    </location>
</feature>
<feature type="strand" evidence="6">
    <location>
        <begin position="209"/>
        <end position="214"/>
    </location>
</feature>
<feature type="helix" evidence="6">
    <location>
        <begin position="216"/>
        <end position="222"/>
    </location>
</feature>
<feature type="helix" evidence="6">
    <location>
        <begin position="225"/>
        <end position="228"/>
    </location>
</feature>
<feature type="helix" evidence="6">
    <location>
        <begin position="238"/>
        <end position="249"/>
    </location>
</feature>
<feature type="helix" evidence="6">
    <location>
        <begin position="261"/>
        <end position="277"/>
    </location>
</feature>
<feature type="helix" evidence="6">
    <location>
        <begin position="279"/>
        <end position="298"/>
    </location>
</feature>
<feature type="turn" evidence="6">
    <location>
        <begin position="299"/>
        <end position="301"/>
    </location>
</feature>
<feature type="strand" evidence="6">
    <location>
        <begin position="304"/>
        <end position="307"/>
    </location>
</feature>
<feature type="strand" evidence="6">
    <location>
        <begin position="309"/>
        <end position="311"/>
    </location>
</feature>
<feature type="strand" evidence="6">
    <location>
        <begin position="319"/>
        <end position="322"/>
    </location>
</feature>
<feature type="helix" evidence="6">
    <location>
        <begin position="326"/>
        <end position="335"/>
    </location>
</feature>
<feature type="turn" evidence="6">
    <location>
        <begin position="346"/>
        <end position="348"/>
    </location>
</feature>
<feature type="helix" evidence="6">
    <location>
        <begin position="349"/>
        <end position="351"/>
    </location>
</feature>
<feature type="strand" evidence="6">
    <location>
        <begin position="352"/>
        <end position="355"/>
    </location>
</feature>
<feature type="helix" evidence="6">
    <location>
        <begin position="359"/>
        <end position="361"/>
    </location>
</feature>
<feature type="helix" evidence="6">
    <location>
        <begin position="369"/>
        <end position="380"/>
    </location>
</feature>
<organism>
    <name type="scientific">Saccharomyces cerevisiae (strain ATCC 204508 / S288c)</name>
    <name type="common">Baker's yeast</name>
    <dbReference type="NCBI Taxonomy" id="559292"/>
    <lineage>
        <taxon>Eukaryota</taxon>
        <taxon>Fungi</taxon>
        <taxon>Dikarya</taxon>
        <taxon>Ascomycota</taxon>
        <taxon>Saccharomycotina</taxon>
        <taxon>Saccharomycetes</taxon>
        <taxon>Saccharomycetales</taxon>
        <taxon>Saccharomycetaceae</taxon>
        <taxon>Saccharomyces</taxon>
    </lineage>
</organism>
<protein>
    <recommendedName>
        <fullName evidence="4">Alanine--glyoxylate aminotransferase 1</fullName>
        <ecNumber evidence="2">2.6.1.44</ecNumber>
    </recommendedName>
</protein>
<dbReference type="EC" id="2.6.1.44" evidence="2"/>
<dbReference type="EMBL" id="D50617">
    <property type="protein sequence ID" value="BAA09208.1"/>
    <property type="molecule type" value="Genomic_DNA"/>
</dbReference>
<dbReference type="EMBL" id="BK006940">
    <property type="protein sequence ID" value="DAA12410.1"/>
    <property type="molecule type" value="Genomic_DNA"/>
</dbReference>
<dbReference type="PIR" id="S56224">
    <property type="entry name" value="S56224"/>
</dbReference>
<dbReference type="RefSeq" id="NP_116623.1">
    <property type="nucleotide sequence ID" value="NM_001179936.1"/>
</dbReference>
<dbReference type="PDB" id="2BKW">
    <property type="method" value="X-ray"/>
    <property type="resolution" value="2.57 A"/>
    <property type="chains" value="A=1-385"/>
</dbReference>
<dbReference type="PDBsum" id="2BKW"/>
<dbReference type="SMR" id="P43567"/>
<dbReference type="BioGRID" id="31116">
    <property type="interactions" value="39"/>
</dbReference>
<dbReference type="DIP" id="DIP-5433N"/>
<dbReference type="FunCoup" id="P43567">
    <property type="interactions" value="1688"/>
</dbReference>
<dbReference type="IntAct" id="P43567">
    <property type="interactions" value="3"/>
</dbReference>
<dbReference type="STRING" id="4932.YFL030W"/>
<dbReference type="GlyGen" id="P43567">
    <property type="glycosylation" value="1 site"/>
</dbReference>
<dbReference type="iPTMnet" id="P43567"/>
<dbReference type="PaxDb" id="4932-YFL030W"/>
<dbReference type="PeptideAtlas" id="P43567"/>
<dbReference type="EnsemblFungi" id="YFL030W_mRNA">
    <property type="protein sequence ID" value="YFL030W"/>
    <property type="gene ID" value="YFL030W"/>
</dbReference>
<dbReference type="GeneID" id="850514"/>
<dbReference type="KEGG" id="sce:YFL030W"/>
<dbReference type="AGR" id="SGD:S000001864"/>
<dbReference type="SGD" id="S000001864">
    <property type="gene designation" value="AGX1"/>
</dbReference>
<dbReference type="VEuPathDB" id="FungiDB:YFL030W"/>
<dbReference type="eggNOG" id="KOG2862">
    <property type="taxonomic scope" value="Eukaryota"/>
</dbReference>
<dbReference type="GeneTree" id="ENSGT00940000153241"/>
<dbReference type="HOGENOM" id="CLU_027686_5_2_1"/>
<dbReference type="InParanoid" id="P43567"/>
<dbReference type="OMA" id="YEWDTPA"/>
<dbReference type="OrthoDB" id="7403325at2759"/>
<dbReference type="BioCyc" id="MetaCyc:MONOMER3O-372"/>
<dbReference type="BioCyc" id="YEAST:MONOMER3O-372"/>
<dbReference type="BRENDA" id="2.6.1.44">
    <property type="organism ID" value="984"/>
</dbReference>
<dbReference type="SABIO-RK" id="P43567"/>
<dbReference type="UniPathway" id="UPA00288">
    <property type="reaction ID" value="UER00428"/>
</dbReference>
<dbReference type="BioGRID-ORCS" id="850514">
    <property type="hits" value="4 hits in 10 CRISPR screens"/>
</dbReference>
<dbReference type="EvolutionaryTrace" id="P43567"/>
<dbReference type="PRO" id="PR:P43567"/>
<dbReference type="Proteomes" id="UP000002311">
    <property type="component" value="Chromosome VI"/>
</dbReference>
<dbReference type="RNAct" id="P43567">
    <property type="molecule type" value="protein"/>
</dbReference>
<dbReference type="GO" id="GO:0005829">
    <property type="term" value="C:cytosol"/>
    <property type="evidence" value="ECO:0007005"/>
    <property type="project" value="SGD"/>
</dbReference>
<dbReference type="GO" id="GO:0005739">
    <property type="term" value="C:mitochondrion"/>
    <property type="evidence" value="ECO:0007005"/>
    <property type="project" value="SGD"/>
</dbReference>
<dbReference type="GO" id="GO:0005777">
    <property type="term" value="C:peroxisome"/>
    <property type="evidence" value="ECO:0000318"/>
    <property type="project" value="GO_Central"/>
</dbReference>
<dbReference type="GO" id="GO:0008453">
    <property type="term" value="F:alanine-glyoxylate transaminase activity"/>
    <property type="evidence" value="ECO:0000314"/>
    <property type="project" value="SGD"/>
</dbReference>
<dbReference type="GO" id="GO:0004760">
    <property type="term" value="F:L-serine-pyruvate transaminase activity"/>
    <property type="evidence" value="ECO:0000318"/>
    <property type="project" value="GO_Central"/>
</dbReference>
<dbReference type="GO" id="GO:0019265">
    <property type="term" value="P:glycine biosynthetic process, by transamination of glyoxylate"/>
    <property type="evidence" value="ECO:0000314"/>
    <property type="project" value="SGD"/>
</dbReference>
<dbReference type="CDD" id="cd06451">
    <property type="entry name" value="AGAT_like"/>
    <property type="match status" value="1"/>
</dbReference>
<dbReference type="FunFam" id="3.90.1150.10:FF:000049">
    <property type="entry name" value="Alanine-glyoxylate aminotransferase 1"/>
    <property type="match status" value="1"/>
</dbReference>
<dbReference type="FunFam" id="3.40.640.10:FF:000027">
    <property type="entry name" value="Serine--pyruvate aminotransferase, mitochondrial"/>
    <property type="match status" value="1"/>
</dbReference>
<dbReference type="Gene3D" id="3.90.1150.10">
    <property type="entry name" value="Aspartate Aminotransferase, domain 1"/>
    <property type="match status" value="1"/>
</dbReference>
<dbReference type="Gene3D" id="3.40.640.10">
    <property type="entry name" value="Type I PLP-dependent aspartate aminotransferase-like (Major domain)"/>
    <property type="match status" value="1"/>
</dbReference>
<dbReference type="InterPro" id="IPR000192">
    <property type="entry name" value="Aminotrans_V_dom"/>
</dbReference>
<dbReference type="InterPro" id="IPR015424">
    <property type="entry name" value="PyrdxlP-dep_Trfase"/>
</dbReference>
<dbReference type="InterPro" id="IPR015421">
    <property type="entry name" value="PyrdxlP-dep_Trfase_major"/>
</dbReference>
<dbReference type="InterPro" id="IPR015422">
    <property type="entry name" value="PyrdxlP-dep_Trfase_small"/>
</dbReference>
<dbReference type="InterPro" id="IPR024169">
    <property type="entry name" value="SP_NH2Trfase/AEP_transaminase"/>
</dbReference>
<dbReference type="PANTHER" id="PTHR21152:SF24">
    <property type="entry name" value="ALANINE--GLYOXYLATE AMINOTRANSFERASE 1"/>
    <property type="match status" value="1"/>
</dbReference>
<dbReference type="PANTHER" id="PTHR21152">
    <property type="entry name" value="AMINOTRANSFERASE CLASS V"/>
    <property type="match status" value="1"/>
</dbReference>
<dbReference type="Pfam" id="PF00266">
    <property type="entry name" value="Aminotran_5"/>
    <property type="match status" value="1"/>
</dbReference>
<dbReference type="PIRSF" id="PIRSF000524">
    <property type="entry name" value="SPT"/>
    <property type="match status" value="1"/>
</dbReference>
<dbReference type="SUPFAM" id="SSF53383">
    <property type="entry name" value="PLP-dependent transferases"/>
    <property type="match status" value="1"/>
</dbReference>
<dbReference type="PROSITE" id="PS00595">
    <property type="entry name" value="AA_TRANSFER_CLASS_5"/>
    <property type="match status" value="1"/>
</dbReference>
<proteinExistence type="evidence at protein level"/>
<comment type="function">
    <text evidence="2 3">Has alanine:glyoxylate aminotransferase activity.</text>
</comment>
<comment type="catalytic activity">
    <reaction evidence="2">
        <text>glyoxylate + L-alanine = glycine + pyruvate</text>
        <dbReference type="Rhea" id="RHEA:24248"/>
        <dbReference type="ChEBI" id="CHEBI:15361"/>
        <dbReference type="ChEBI" id="CHEBI:36655"/>
        <dbReference type="ChEBI" id="CHEBI:57305"/>
        <dbReference type="ChEBI" id="CHEBI:57972"/>
        <dbReference type="EC" id="2.6.1.44"/>
    </reaction>
</comment>
<comment type="cofactor">
    <cofactor evidence="2">
        <name>pyridoxal 5'-phosphate</name>
        <dbReference type="ChEBI" id="CHEBI:597326"/>
    </cofactor>
</comment>
<comment type="biophysicochemical properties">
    <kinetics>
        <KM evidence="2">2.26 mM for L-alanine</KM>
        <KM evidence="2">0.18 mM for glyoxylate</KM>
        <Vmax evidence="2">180.0 umol/min/mg enzyme</Vmax>
    </kinetics>
</comment>
<comment type="pathway">
    <text>Amino-acid biosynthesis; glycine biosynthesis; glycine from glyoxylate: step 1/1.</text>
</comment>
<comment type="subunit">
    <text evidence="2">Homodimer.</text>
</comment>
<comment type="disruption phenotype">
    <text evidence="2">Alanine:glyoxylate aminotransferase activity is reduced by 98% relative to wild-type.</text>
</comment>
<comment type="miscellaneous">
    <text evidence="1">Present with 339 molecules/cell in log phase SD medium. Expression levels higher in stationary phase than in exponential growth phase when grown in complex medium with glucose.</text>
</comment>
<comment type="similarity">
    <text evidence="5">Belongs to the class-V pyridoxal-phosphate-dependent aminotransferase family.</text>
</comment>
<gene>
    <name evidence="4" type="primary">AGX1</name>
    <name type="ordered locus">YFL030W</name>
</gene>
<reference key="1">
    <citation type="journal article" date="1995" name="Nat. Genet.">
        <title>Analysis of the nucleotide sequence of chromosome VI from Saccharomyces cerevisiae.</title>
        <authorList>
            <person name="Murakami Y."/>
            <person name="Naitou M."/>
            <person name="Hagiwara H."/>
            <person name="Shibata T."/>
            <person name="Ozawa M."/>
            <person name="Sasanuma S."/>
            <person name="Sasanuma M."/>
            <person name="Tsuchiya Y."/>
            <person name="Soeda E."/>
            <person name="Yokoyama K."/>
            <person name="Yamazaki M."/>
            <person name="Tashiro H."/>
            <person name="Eki T."/>
        </authorList>
    </citation>
    <scope>NUCLEOTIDE SEQUENCE [LARGE SCALE GENOMIC DNA]</scope>
    <source>
        <strain>ATCC 204508 / S288c</strain>
    </source>
</reference>
<reference key="2">
    <citation type="journal article" date="2014" name="G3 (Bethesda)">
        <title>The reference genome sequence of Saccharomyces cerevisiae: Then and now.</title>
        <authorList>
            <person name="Engel S.R."/>
            <person name="Dietrich F.S."/>
            <person name="Fisk D.G."/>
            <person name="Binkley G."/>
            <person name="Balakrishnan R."/>
            <person name="Costanzo M.C."/>
            <person name="Dwight S.S."/>
            <person name="Hitz B.C."/>
            <person name="Karra K."/>
            <person name="Nash R.S."/>
            <person name="Weng S."/>
            <person name="Wong E.D."/>
            <person name="Lloyd P."/>
            <person name="Skrzypek M.S."/>
            <person name="Miyasato S.R."/>
            <person name="Simison M."/>
            <person name="Cherry J.M."/>
        </authorList>
    </citation>
    <scope>GENOME REANNOTATION</scope>
    <source>
        <strain>ATCC 204508 / S288c</strain>
    </source>
</reference>
<reference key="3">
    <citation type="journal article" date="1985" name="Biochem. J.">
        <title>Characteristics of alanine:glyoxylate aminotransferase from Saccharomyces cerevisiae, a regulatory enzyme in the glyoxylate pathway of glycine and serine biosynthesis from tricarboxylic acid-cycle intermediates.</title>
        <authorList>
            <person name="Takada Y."/>
            <person name="Noguchi T."/>
        </authorList>
    </citation>
    <scope>FUNCTION</scope>
</reference>
<reference key="4">
    <citation type="journal article" date="2003" name="Nature">
        <title>Global analysis of protein expression in yeast.</title>
        <authorList>
            <person name="Ghaemmaghami S."/>
            <person name="Huh W.-K."/>
            <person name="Bower K."/>
            <person name="Howson R.W."/>
            <person name="Belle A."/>
            <person name="Dephoure N."/>
            <person name="O'Shea E.K."/>
            <person name="Weissman J.S."/>
        </authorList>
    </citation>
    <scope>LEVEL OF PROTEIN EXPRESSION [LARGE SCALE ANALYSIS]</scope>
</reference>
<reference key="5">
    <citation type="journal article" date="2004" name="Yeast">
        <title>Alanine:glyoxylate aminotransferase of Saccharomyces cerevisiae-encoding gene AGX1 and metabolic significance.</title>
        <authorList>
            <person name="Schlosser T."/>
            <person name="Gatgens C."/>
            <person name="Weber U."/>
            <person name="Stahmann K.-P."/>
        </authorList>
    </citation>
    <scope>CHARACTERIZATION</scope>
</reference>
<reference key="6">
    <citation type="journal article" date="2005" name="Biochimie">
        <title>Crystal structure and confirmation of the alanine:glyoxylate aminotransferase activity of the YFL030w yeast protein.</title>
        <authorList>
            <person name="Meyer P."/>
            <person name="Liger D."/>
            <person name="Leulliot N."/>
            <person name="Quevillon-Cheruel S."/>
            <person name="Zhou C.-Z."/>
            <person name="Borel F."/>
            <person name="Ferrer J.-L."/>
            <person name="Poupon A."/>
            <person name="Janin J."/>
            <person name="van Tilbeurgh H."/>
        </authorList>
    </citation>
    <scope>X-RAY CRYSTALLOGRAPHY (2.57 ANGSTROMS) IN COMPLEX WITH PYRODOXAL PHOSPHATE AND GLYOXYLATE</scope>
    <scope>CATALYTIC ACTIVITY</scope>
    <scope>BIOPHYSICOCHEMICAL PROPERTIES</scope>
    <scope>COFACTOR</scope>
    <scope>DISRUPTION PHENOTYPE</scope>
    <scope>FUNCTION</scope>
    <scope>SUBUNIT</scope>
</reference>
<name>AGX1_YEAST</name>
<accession>P43567</accession>
<accession>D6VTK0</accession>
<keyword id="KW-0002">3D-structure</keyword>
<keyword id="KW-0032">Aminotransferase</keyword>
<keyword id="KW-0663">Pyridoxal phosphate</keyword>
<keyword id="KW-1185">Reference proteome</keyword>
<keyword id="KW-0808">Transferase</keyword>
<evidence type="ECO:0000269" key="1">
    <source>
    </source>
</evidence>
<evidence type="ECO:0000269" key="2">
    <source>
    </source>
</evidence>
<evidence type="ECO:0000269" key="3">
    <source>
    </source>
</evidence>
<evidence type="ECO:0000303" key="4">
    <source>
    </source>
</evidence>
<evidence type="ECO:0000305" key="5"/>
<evidence type="ECO:0007829" key="6">
    <source>
        <dbReference type="PDB" id="2BKW"/>
    </source>
</evidence>
<sequence>MTKSVDTLLIPGPIILSGAVQKALDVPSLGHTSPEFVSIFQRVLKNTRAVFKSAAASKSQPFVLAGSGTLGWDIFASNFILSKAPNKNVLVVSTGTFSDRFADCLRSYGAQVDVVRPLKIGESVPLELITEKLSQNSYGAVTVTHVDTSTAVLSDLKAISQAIKQTSPETFFVVDAVCSIGCEEFEFDEWGVDFALTASQKAIGAPAGLSISLCSSRFMDYALNDSKNGHVHGYFSSLRRWTPIMENYEAGKGAYFATPPVQLINSLDVALKEILEEGLHKRWDLHREMSDWFKDSLVNGLQLTSVSRYPSNMSAHGLTAVYVADPPDVIAFLKSHGVVIAGGIHKDIGPKYIRIGHMGVTACNKNLPYMKNCFDLIKLALQRKK</sequence>